<proteinExistence type="inferred from homology"/>
<reference key="1">
    <citation type="journal article" date="2010" name="Genome Biol. Evol.">
        <title>Continuing evolution of Burkholderia mallei through genome reduction and large-scale rearrangements.</title>
        <authorList>
            <person name="Losada L."/>
            <person name="Ronning C.M."/>
            <person name="DeShazer D."/>
            <person name="Woods D."/>
            <person name="Fedorova N."/>
            <person name="Kim H.S."/>
            <person name="Shabalina S.A."/>
            <person name="Pearson T.R."/>
            <person name="Brinkac L."/>
            <person name="Tan P."/>
            <person name="Nandi T."/>
            <person name="Crabtree J."/>
            <person name="Badger J."/>
            <person name="Beckstrom-Sternberg S."/>
            <person name="Saqib M."/>
            <person name="Schutzer S.E."/>
            <person name="Keim P."/>
            <person name="Nierman W.C."/>
        </authorList>
    </citation>
    <scope>NUCLEOTIDE SEQUENCE [LARGE SCALE GENOMIC DNA]</scope>
    <source>
        <strain>NCTC 10229</strain>
    </source>
</reference>
<dbReference type="EC" id="3.4.24.-" evidence="1"/>
<dbReference type="EMBL" id="CP000546">
    <property type="protein sequence ID" value="ABN03245.1"/>
    <property type="molecule type" value="Genomic_DNA"/>
</dbReference>
<dbReference type="RefSeq" id="WP_004189409.1">
    <property type="nucleotide sequence ID" value="NC_008836.1"/>
</dbReference>
<dbReference type="GeneID" id="93058627"/>
<dbReference type="KEGG" id="bml:BMA10229_A2278"/>
<dbReference type="HOGENOM" id="CLU_042266_3_0_4"/>
<dbReference type="Proteomes" id="UP000002283">
    <property type="component" value="Chromosome I"/>
</dbReference>
<dbReference type="GO" id="GO:0005886">
    <property type="term" value="C:plasma membrane"/>
    <property type="evidence" value="ECO:0007669"/>
    <property type="project" value="UniProtKB-SubCell"/>
</dbReference>
<dbReference type="GO" id="GO:0004222">
    <property type="term" value="F:metalloendopeptidase activity"/>
    <property type="evidence" value="ECO:0007669"/>
    <property type="project" value="UniProtKB-UniRule"/>
</dbReference>
<dbReference type="GO" id="GO:0008270">
    <property type="term" value="F:zinc ion binding"/>
    <property type="evidence" value="ECO:0007669"/>
    <property type="project" value="UniProtKB-UniRule"/>
</dbReference>
<dbReference type="GO" id="GO:0006508">
    <property type="term" value="P:proteolysis"/>
    <property type="evidence" value="ECO:0007669"/>
    <property type="project" value="UniProtKB-KW"/>
</dbReference>
<dbReference type="CDD" id="cd07336">
    <property type="entry name" value="M48B_HtpX_like"/>
    <property type="match status" value="1"/>
</dbReference>
<dbReference type="Gene3D" id="3.30.2010.10">
    <property type="entry name" value="Metalloproteases ('zincins'), catalytic domain"/>
    <property type="match status" value="1"/>
</dbReference>
<dbReference type="HAMAP" id="MF_00188">
    <property type="entry name" value="Pept_M48_protease_HtpX"/>
    <property type="match status" value="1"/>
</dbReference>
<dbReference type="InterPro" id="IPR050083">
    <property type="entry name" value="HtpX_protease"/>
</dbReference>
<dbReference type="InterPro" id="IPR022919">
    <property type="entry name" value="Pept_M48_protease_HtpX"/>
</dbReference>
<dbReference type="InterPro" id="IPR001915">
    <property type="entry name" value="Peptidase_M48"/>
</dbReference>
<dbReference type="NCBIfam" id="NF002363">
    <property type="entry name" value="PRK01345.1"/>
    <property type="match status" value="1"/>
</dbReference>
<dbReference type="NCBIfam" id="NF002826">
    <property type="entry name" value="PRK03001.1"/>
    <property type="match status" value="1"/>
</dbReference>
<dbReference type="PANTHER" id="PTHR43221">
    <property type="entry name" value="PROTEASE HTPX"/>
    <property type="match status" value="1"/>
</dbReference>
<dbReference type="PANTHER" id="PTHR43221:SF1">
    <property type="entry name" value="PROTEASE HTPX"/>
    <property type="match status" value="1"/>
</dbReference>
<dbReference type="Pfam" id="PF01435">
    <property type="entry name" value="Peptidase_M48"/>
    <property type="match status" value="1"/>
</dbReference>
<accession>A2S8H2</accession>
<protein>
    <recommendedName>
        <fullName evidence="1">Protease HtpX homolog</fullName>
        <ecNumber evidence="1">3.4.24.-</ecNumber>
    </recommendedName>
</protein>
<keyword id="KW-0997">Cell inner membrane</keyword>
<keyword id="KW-1003">Cell membrane</keyword>
<keyword id="KW-0378">Hydrolase</keyword>
<keyword id="KW-0472">Membrane</keyword>
<keyword id="KW-0479">Metal-binding</keyword>
<keyword id="KW-0482">Metalloprotease</keyword>
<keyword id="KW-0645">Protease</keyword>
<keyword id="KW-0812">Transmembrane</keyword>
<keyword id="KW-1133">Transmembrane helix</keyword>
<keyword id="KW-0862">Zinc</keyword>
<gene>
    <name evidence="1" type="primary">htpX</name>
    <name type="ordered locus">BMA10229_A2278</name>
</gene>
<sequence>MFNWVKTAMLMAAITALFIVIGGMIGGSRGMTIALLIALGMNFFSYWFSDKMVLRMYNAQEVDEATAPQFYRMVRELATRANLPMPRVYLIDENQPNAFATGRNPEHAAVAATTGILRVLSEREMRGVMAHELAHVKHRDILISTISATMAGAISALANFAMFFGGRDENGRPANPIAGIAVALLAPIAGALIQMAISRAREFEADRGGAQISGDPQALASALDKIHRYASGIPFQTAEEHPATAQMMIMNPLSGGGLQNLFSTHPATEERIARLMDMARTGRFD</sequence>
<evidence type="ECO:0000255" key="1">
    <source>
        <dbReference type="HAMAP-Rule" id="MF_00188"/>
    </source>
</evidence>
<comment type="cofactor">
    <cofactor evidence="1">
        <name>Zn(2+)</name>
        <dbReference type="ChEBI" id="CHEBI:29105"/>
    </cofactor>
    <text evidence="1">Binds 1 zinc ion per subunit.</text>
</comment>
<comment type="subcellular location">
    <subcellularLocation>
        <location evidence="1">Cell inner membrane</location>
        <topology evidence="1">Multi-pass membrane protein</topology>
    </subcellularLocation>
</comment>
<comment type="similarity">
    <text evidence="1">Belongs to the peptidase M48B family.</text>
</comment>
<name>HTPX_BURM9</name>
<organism>
    <name type="scientific">Burkholderia mallei (strain NCTC 10229)</name>
    <dbReference type="NCBI Taxonomy" id="412022"/>
    <lineage>
        <taxon>Bacteria</taxon>
        <taxon>Pseudomonadati</taxon>
        <taxon>Pseudomonadota</taxon>
        <taxon>Betaproteobacteria</taxon>
        <taxon>Burkholderiales</taxon>
        <taxon>Burkholderiaceae</taxon>
        <taxon>Burkholderia</taxon>
        <taxon>pseudomallei group</taxon>
    </lineage>
</organism>
<feature type="chain" id="PRO_1000077452" description="Protease HtpX homolog">
    <location>
        <begin position="1"/>
        <end position="285"/>
    </location>
</feature>
<feature type="transmembrane region" description="Helical" evidence="1">
    <location>
        <begin position="7"/>
        <end position="27"/>
    </location>
</feature>
<feature type="transmembrane region" description="Helical" evidence="1">
    <location>
        <begin position="30"/>
        <end position="50"/>
    </location>
</feature>
<feature type="transmembrane region" description="Helical" evidence="1">
    <location>
        <begin position="146"/>
        <end position="166"/>
    </location>
</feature>
<feature type="transmembrane region" description="Helical" evidence="1">
    <location>
        <begin position="177"/>
        <end position="197"/>
    </location>
</feature>
<feature type="active site" evidence="1">
    <location>
        <position position="132"/>
    </location>
</feature>
<feature type="binding site" evidence="1">
    <location>
        <position position="131"/>
    </location>
    <ligand>
        <name>Zn(2+)</name>
        <dbReference type="ChEBI" id="CHEBI:29105"/>
        <note>catalytic</note>
    </ligand>
</feature>
<feature type="binding site" evidence="1">
    <location>
        <position position="135"/>
    </location>
    <ligand>
        <name>Zn(2+)</name>
        <dbReference type="ChEBI" id="CHEBI:29105"/>
        <note>catalytic</note>
    </ligand>
</feature>
<feature type="binding site" evidence="1">
    <location>
        <position position="202"/>
    </location>
    <ligand>
        <name>Zn(2+)</name>
        <dbReference type="ChEBI" id="CHEBI:29105"/>
        <note>catalytic</note>
    </ligand>
</feature>